<evidence type="ECO:0000255" key="1">
    <source>
        <dbReference type="HAMAP-Rule" id="MF_01821"/>
    </source>
</evidence>
<dbReference type="EC" id="3.6.4.-" evidence="1"/>
<dbReference type="EMBL" id="CU928160">
    <property type="protein sequence ID" value="CAQ96949.1"/>
    <property type="molecule type" value="Genomic_DNA"/>
</dbReference>
<dbReference type="RefSeq" id="WP_001117010.1">
    <property type="nucleotide sequence ID" value="NC_011741.1"/>
</dbReference>
<dbReference type="SMR" id="B7M0F4"/>
<dbReference type="KEGG" id="ecr:ECIAI1_0059"/>
<dbReference type="HOGENOM" id="CLU_011520_0_0_6"/>
<dbReference type="GO" id="GO:0005524">
    <property type="term" value="F:ATP binding"/>
    <property type="evidence" value="ECO:0007669"/>
    <property type="project" value="UniProtKB-UniRule"/>
</dbReference>
<dbReference type="GO" id="GO:0003677">
    <property type="term" value="F:DNA binding"/>
    <property type="evidence" value="ECO:0007669"/>
    <property type="project" value="UniProtKB-KW"/>
</dbReference>
<dbReference type="GO" id="GO:0004386">
    <property type="term" value="F:helicase activity"/>
    <property type="evidence" value="ECO:0007669"/>
    <property type="project" value="UniProtKB-UniRule"/>
</dbReference>
<dbReference type="GO" id="GO:0016817">
    <property type="term" value="F:hydrolase activity, acting on acid anhydrides"/>
    <property type="evidence" value="ECO:0007669"/>
    <property type="project" value="InterPro"/>
</dbReference>
<dbReference type="GO" id="GO:0006355">
    <property type="term" value="P:regulation of DNA-templated transcription"/>
    <property type="evidence" value="ECO:0007669"/>
    <property type="project" value="UniProtKB-UniRule"/>
</dbReference>
<dbReference type="CDD" id="cd18011">
    <property type="entry name" value="DEXDc_RapA"/>
    <property type="match status" value="1"/>
</dbReference>
<dbReference type="CDD" id="cd18793">
    <property type="entry name" value="SF2_C_SNF"/>
    <property type="match status" value="1"/>
</dbReference>
<dbReference type="FunFam" id="2.30.30.140:FF:000020">
    <property type="entry name" value="RNA polymerase-associated protein RapA"/>
    <property type="match status" value="1"/>
</dbReference>
<dbReference type="FunFam" id="2.30.30.930:FF:000001">
    <property type="entry name" value="RNA polymerase-associated protein RapA"/>
    <property type="match status" value="1"/>
</dbReference>
<dbReference type="FunFam" id="3.30.360.80:FF:000001">
    <property type="entry name" value="RNA polymerase-associated protein RapA"/>
    <property type="match status" value="1"/>
</dbReference>
<dbReference type="FunFam" id="3.40.50.10810:FF:000012">
    <property type="entry name" value="RNA polymerase-associated protein RapA"/>
    <property type="match status" value="1"/>
</dbReference>
<dbReference type="FunFam" id="3.40.50.300:FF:000350">
    <property type="entry name" value="RNA polymerase-associated protein RapA"/>
    <property type="match status" value="1"/>
</dbReference>
<dbReference type="Gene3D" id="2.30.30.140">
    <property type="match status" value="1"/>
</dbReference>
<dbReference type="Gene3D" id="2.30.30.930">
    <property type="match status" value="1"/>
</dbReference>
<dbReference type="Gene3D" id="3.30.360.80">
    <property type="match status" value="1"/>
</dbReference>
<dbReference type="Gene3D" id="6.10.140.1500">
    <property type="match status" value="1"/>
</dbReference>
<dbReference type="Gene3D" id="6.10.140.2230">
    <property type="match status" value="1"/>
</dbReference>
<dbReference type="Gene3D" id="3.40.50.300">
    <property type="entry name" value="P-loop containing nucleotide triphosphate hydrolases"/>
    <property type="match status" value="1"/>
</dbReference>
<dbReference type="Gene3D" id="3.40.50.10810">
    <property type="entry name" value="Tandem AAA-ATPase domain"/>
    <property type="match status" value="1"/>
</dbReference>
<dbReference type="HAMAP" id="MF_01821">
    <property type="entry name" value="Helicase_RapA"/>
    <property type="match status" value="1"/>
</dbReference>
<dbReference type="InterPro" id="IPR014001">
    <property type="entry name" value="Helicase_ATP-bd"/>
</dbReference>
<dbReference type="InterPro" id="IPR001650">
    <property type="entry name" value="Helicase_C-like"/>
</dbReference>
<dbReference type="InterPro" id="IPR023949">
    <property type="entry name" value="Helicase_RapA"/>
</dbReference>
<dbReference type="InterPro" id="IPR027417">
    <property type="entry name" value="P-loop_NTPase"/>
</dbReference>
<dbReference type="InterPro" id="IPR022737">
    <property type="entry name" value="RapA_C"/>
</dbReference>
<dbReference type="InterPro" id="IPR038718">
    <property type="entry name" value="SNF2-like_sf"/>
</dbReference>
<dbReference type="InterPro" id="IPR049730">
    <property type="entry name" value="SNF2/RAD54-like_C"/>
</dbReference>
<dbReference type="InterPro" id="IPR000330">
    <property type="entry name" value="SNF2_N"/>
</dbReference>
<dbReference type="InterPro" id="IPR040765">
    <property type="entry name" value="Tudor_1_RapA"/>
</dbReference>
<dbReference type="InterPro" id="IPR040766">
    <property type="entry name" value="Tudor_2_RapA"/>
</dbReference>
<dbReference type="NCBIfam" id="NF003426">
    <property type="entry name" value="PRK04914.1"/>
    <property type="match status" value="1"/>
</dbReference>
<dbReference type="PANTHER" id="PTHR45766">
    <property type="entry name" value="DNA ANNEALING HELICASE AND ENDONUCLEASE ZRANB3 FAMILY MEMBER"/>
    <property type="match status" value="1"/>
</dbReference>
<dbReference type="PANTHER" id="PTHR45766:SF6">
    <property type="entry name" value="SWI_SNF-RELATED MATRIX-ASSOCIATED ACTIN-DEPENDENT REGULATOR OF CHROMATIN SUBFAMILY A-LIKE PROTEIN 1"/>
    <property type="match status" value="1"/>
</dbReference>
<dbReference type="Pfam" id="PF00271">
    <property type="entry name" value="Helicase_C"/>
    <property type="match status" value="1"/>
</dbReference>
<dbReference type="Pfam" id="PF12137">
    <property type="entry name" value="RapA_C"/>
    <property type="match status" value="1"/>
</dbReference>
<dbReference type="Pfam" id="PF00176">
    <property type="entry name" value="SNF2-rel_dom"/>
    <property type="match status" value="1"/>
</dbReference>
<dbReference type="Pfam" id="PF18339">
    <property type="entry name" value="Tudor_1_RapA"/>
    <property type="match status" value="1"/>
</dbReference>
<dbReference type="Pfam" id="PF18337">
    <property type="entry name" value="Tudor_RapA"/>
    <property type="match status" value="1"/>
</dbReference>
<dbReference type="SMART" id="SM00487">
    <property type="entry name" value="DEXDc"/>
    <property type="match status" value="1"/>
</dbReference>
<dbReference type="SMART" id="SM00490">
    <property type="entry name" value="HELICc"/>
    <property type="match status" value="1"/>
</dbReference>
<dbReference type="SUPFAM" id="SSF52540">
    <property type="entry name" value="P-loop containing nucleoside triphosphate hydrolases"/>
    <property type="match status" value="2"/>
</dbReference>
<dbReference type="PROSITE" id="PS51192">
    <property type="entry name" value="HELICASE_ATP_BIND_1"/>
    <property type="match status" value="1"/>
</dbReference>
<dbReference type="PROSITE" id="PS51194">
    <property type="entry name" value="HELICASE_CTER"/>
    <property type="match status" value="1"/>
</dbReference>
<comment type="function">
    <text evidence="1">Transcription regulator that activates transcription by stimulating RNA polymerase (RNAP) recycling in case of stress conditions such as supercoiled DNA or high salt concentrations. Probably acts by releasing the RNAP, when it is trapped or immobilized on tightly supercoiled DNA. Does not activate transcription on linear DNA. Probably not involved in DNA repair.</text>
</comment>
<comment type="subunit">
    <text evidence="1">Interacts with the RNAP. Has a higher affinity for the core RNAP than for the holoenzyme. Its ATPase activity is stimulated by binding to RNAP.</text>
</comment>
<comment type="similarity">
    <text evidence="1">Belongs to the SNF2/RAD54 helicase family. RapA subfamily.</text>
</comment>
<gene>
    <name evidence="1" type="primary">rapA</name>
    <name type="ordered locus">ECIAI1_0059</name>
</gene>
<accession>B7M0F4</accession>
<proteinExistence type="inferred from homology"/>
<name>RAPA_ECO8A</name>
<feature type="chain" id="PRO_1000188173" description="RNA polymerase-associated protein RapA">
    <location>
        <begin position="1"/>
        <end position="968"/>
    </location>
</feature>
<feature type="domain" description="Helicase ATP-binding" evidence="1">
    <location>
        <begin position="164"/>
        <end position="334"/>
    </location>
</feature>
<feature type="domain" description="Helicase C-terminal" evidence="1">
    <location>
        <begin position="490"/>
        <end position="662"/>
    </location>
</feature>
<feature type="short sequence motif" description="DEAH box">
    <location>
        <begin position="280"/>
        <end position="283"/>
    </location>
</feature>
<feature type="binding site" evidence="1">
    <location>
        <begin position="177"/>
        <end position="184"/>
    </location>
    <ligand>
        <name>ATP</name>
        <dbReference type="ChEBI" id="CHEBI:30616"/>
    </ligand>
</feature>
<reference key="1">
    <citation type="journal article" date="2009" name="PLoS Genet.">
        <title>Organised genome dynamics in the Escherichia coli species results in highly diverse adaptive paths.</title>
        <authorList>
            <person name="Touchon M."/>
            <person name="Hoede C."/>
            <person name="Tenaillon O."/>
            <person name="Barbe V."/>
            <person name="Baeriswyl S."/>
            <person name="Bidet P."/>
            <person name="Bingen E."/>
            <person name="Bonacorsi S."/>
            <person name="Bouchier C."/>
            <person name="Bouvet O."/>
            <person name="Calteau A."/>
            <person name="Chiapello H."/>
            <person name="Clermont O."/>
            <person name="Cruveiller S."/>
            <person name="Danchin A."/>
            <person name="Diard M."/>
            <person name="Dossat C."/>
            <person name="Karoui M.E."/>
            <person name="Frapy E."/>
            <person name="Garry L."/>
            <person name="Ghigo J.M."/>
            <person name="Gilles A.M."/>
            <person name="Johnson J."/>
            <person name="Le Bouguenec C."/>
            <person name="Lescat M."/>
            <person name="Mangenot S."/>
            <person name="Martinez-Jehanne V."/>
            <person name="Matic I."/>
            <person name="Nassif X."/>
            <person name="Oztas S."/>
            <person name="Petit M.A."/>
            <person name="Pichon C."/>
            <person name="Rouy Z."/>
            <person name="Ruf C.S."/>
            <person name="Schneider D."/>
            <person name="Tourret J."/>
            <person name="Vacherie B."/>
            <person name="Vallenet D."/>
            <person name="Medigue C."/>
            <person name="Rocha E.P.C."/>
            <person name="Denamur E."/>
        </authorList>
    </citation>
    <scope>NUCLEOTIDE SEQUENCE [LARGE SCALE GENOMIC DNA]</scope>
    <source>
        <strain>IAI1</strain>
    </source>
</reference>
<sequence>MPFTLGQRWISDTESELGLGTVVAVDARTVTLLFPSTGENRLYARSDSPVTRVMFNPGDTITSHDGWQMQVEEVKEENGLLTYIGTRLDTEESGVALREVFLDSKLVFSKPQDRLFAGQIDRMDRFALRYRARKYSSEQFRMPYSGLRGQRTSLIPHQLNIAHDVGRRHAPRVLLADEVGLGKTIEAGMILHQQLLSGAAERVLIIVPETLQHQWLVEMLRRFNLRFALFDDERYAEAQHDAYNPFDTEQLVICSLDFARRSKQRLEHLCEAEWDLLVVDEAHHLVWSEDAPSREYQAIEQLAEHVPGVLLLTATPEQLGMESHFARLRLLDPNRFHDFAQFVEEQKNYRPVADAVAMLLAGNKLSNDELNMLGEMIGEQDIEPLLQAANSDSEDAQSARQELVSMLMDRHGTSRVLFRNTRNGVKGFPKRELHTIKLPLPTQYQTAIKVSGIMGARKSAEDRARDMLYPERIYQEFEGDNATWWNFDPRVEWLMGYLTSHRSQKVLVICAKAATALQLEQVLREREGIRAAVFHEGMSIIERDRAAAWFAEEDTGAQVLLCSEIGSEGRNFQFASHMVMFDLPFNPDLLEQRIGRLDRIGQAHDIQIHVPYLEKTAQSVLVRWYHEGLDAFEHTCPTGRTIYDSVYNDLINYLASPDQTEGFDDLIKNCREQHEALKAQLEQGRDRLLEIHSNGGEKAQALAESIEEQDDDTNLIAFAMNLFDIIGINQDDRGDNMIVLTPSDHMLVPDFPGLSEDGITITFDREVALAREDAQFITWEHPLIRNGLDLILSGDTGSSTISLLKNKALPVGTLLVELIYVVEAQAPKQLQLNRFLPPTPVRMLLDKNGNNLAAQVEFETFNRQLNAVNRHTGSKLVNAVQQDVHAILQLGEAQIEKSARALIDAARNEADEKLSAELSRLEALRAVNPNIRDDELTAIESNRQQIMESLDQAGWRLDALRLIVVTHQ</sequence>
<protein>
    <recommendedName>
        <fullName evidence="1">RNA polymerase-associated protein RapA</fullName>
        <ecNumber evidence="1">3.6.4.-</ecNumber>
    </recommendedName>
    <alternativeName>
        <fullName evidence="1">ATP-dependent helicase HepA</fullName>
    </alternativeName>
</protein>
<organism>
    <name type="scientific">Escherichia coli O8 (strain IAI1)</name>
    <dbReference type="NCBI Taxonomy" id="585034"/>
    <lineage>
        <taxon>Bacteria</taxon>
        <taxon>Pseudomonadati</taxon>
        <taxon>Pseudomonadota</taxon>
        <taxon>Gammaproteobacteria</taxon>
        <taxon>Enterobacterales</taxon>
        <taxon>Enterobacteriaceae</taxon>
        <taxon>Escherichia</taxon>
    </lineage>
</organism>
<keyword id="KW-0010">Activator</keyword>
<keyword id="KW-0067">ATP-binding</keyword>
<keyword id="KW-0238">DNA-binding</keyword>
<keyword id="KW-0347">Helicase</keyword>
<keyword id="KW-0378">Hydrolase</keyword>
<keyword id="KW-0547">Nucleotide-binding</keyword>
<keyword id="KW-0804">Transcription</keyword>
<keyword id="KW-0805">Transcription regulation</keyword>